<name>RL331_MYCSS</name>
<keyword id="KW-0687">Ribonucleoprotein</keyword>
<keyword id="KW-0689">Ribosomal protein</keyword>
<evidence type="ECO:0000255" key="1">
    <source>
        <dbReference type="HAMAP-Rule" id="MF_00294"/>
    </source>
</evidence>
<feature type="chain" id="PRO_0000356562" description="Large ribosomal subunit protein bL33A">
    <location>
        <begin position="1"/>
        <end position="55"/>
    </location>
</feature>
<dbReference type="EMBL" id="CP000384">
    <property type="protein sequence ID" value="ABG07032.1"/>
    <property type="molecule type" value="Genomic_DNA"/>
</dbReference>
<dbReference type="SMR" id="Q1BDK2"/>
<dbReference type="KEGG" id="mmc:Mmcs_0917"/>
<dbReference type="HOGENOM" id="CLU_190949_0_2_11"/>
<dbReference type="BioCyc" id="MSP164756:G1G6O-940-MONOMER"/>
<dbReference type="GO" id="GO:0005737">
    <property type="term" value="C:cytoplasm"/>
    <property type="evidence" value="ECO:0007669"/>
    <property type="project" value="UniProtKB-ARBA"/>
</dbReference>
<dbReference type="GO" id="GO:1990904">
    <property type="term" value="C:ribonucleoprotein complex"/>
    <property type="evidence" value="ECO:0007669"/>
    <property type="project" value="UniProtKB-KW"/>
</dbReference>
<dbReference type="GO" id="GO:0005840">
    <property type="term" value="C:ribosome"/>
    <property type="evidence" value="ECO:0007669"/>
    <property type="project" value="UniProtKB-KW"/>
</dbReference>
<dbReference type="GO" id="GO:0003735">
    <property type="term" value="F:structural constituent of ribosome"/>
    <property type="evidence" value="ECO:0007669"/>
    <property type="project" value="InterPro"/>
</dbReference>
<dbReference type="GO" id="GO:0006412">
    <property type="term" value="P:translation"/>
    <property type="evidence" value="ECO:0007669"/>
    <property type="project" value="UniProtKB-UniRule"/>
</dbReference>
<dbReference type="Gene3D" id="2.20.28.120">
    <property type="entry name" value="Ribosomal protein L33"/>
    <property type="match status" value="1"/>
</dbReference>
<dbReference type="HAMAP" id="MF_00294">
    <property type="entry name" value="Ribosomal_bL33"/>
    <property type="match status" value="1"/>
</dbReference>
<dbReference type="InterPro" id="IPR001705">
    <property type="entry name" value="Ribosomal_bL33"/>
</dbReference>
<dbReference type="InterPro" id="IPR018264">
    <property type="entry name" value="Ribosomal_bL33_CS"/>
</dbReference>
<dbReference type="InterPro" id="IPR038584">
    <property type="entry name" value="Ribosomal_bL33_sf"/>
</dbReference>
<dbReference type="InterPro" id="IPR011332">
    <property type="entry name" value="Ribosomal_zn-bd"/>
</dbReference>
<dbReference type="NCBIfam" id="NF001764">
    <property type="entry name" value="PRK00504.1"/>
    <property type="match status" value="1"/>
</dbReference>
<dbReference type="NCBIfam" id="NF001860">
    <property type="entry name" value="PRK00595.1"/>
    <property type="match status" value="1"/>
</dbReference>
<dbReference type="NCBIfam" id="TIGR01023">
    <property type="entry name" value="rpmG_bact"/>
    <property type="match status" value="1"/>
</dbReference>
<dbReference type="PANTHER" id="PTHR43168">
    <property type="entry name" value="50S RIBOSOMAL PROTEIN L33, CHLOROPLASTIC"/>
    <property type="match status" value="1"/>
</dbReference>
<dbReference type="PANTHER" id="PTHR43168:SF2">
    <property type="entry name" value="LARGE RIBOSOMAL SUBUNIT PROTEIN BL33C"/>
    <property type="match status" value="1"/>
</dbReference>
<dbReference type="Pfam" id="PF00471">
    <property type="entry name" value="Ribosomal_L33"/>
    <property type="match status" value="1"/>
</dbReference>
<dbReference type="SUPFAM" id="SSF57829">
    <property type="entry name" value="Zn-binding ribosomal proteins"/>
    <property type="match status" value="1"/>
</dbReference>
<dbReference type="PROSITE" id="PS00582">
    <property type="entry name" value="RIBOSOMAL_L33"/>
    <property type="match status" value="1"/>
</dbReference>
<proteinExistence type="inferred from homology"/>
<protein>
    <recommendedName>
        <fullName evidence="1">Large ribosomal subunit protein bL33A</fullName>
    </recommendedName>
    <alternativeName>
        <fullName evidence="1">50S ribosomal protein L33 1</fullName>
    </alternativeName>
</protein>
<gene>
    <name evidence="1" type="primary">rpmG1</name>
    <name type="ordered locus">Mmcs_0917</name>
</gene>
<reference key="1">
    <citation type="submission" date="2006-06" db="EMBL/GenBank/DDBJ databases">
        <title>Complete sequence of chromosome of Mycobacterium sp. MCS.</title>
        <authorList>
            <consortium name="US DOE Joint Genome Institute"/>
            <person name="Copeland A."/>
            <person name="Lucas S."/>
            <person name="Lapidus A."/>
            <person name="Barry K."/>
            <person name="Detter J.C."/>
            <person name="Glavina del Rio T."/>
            <person name="Hammon N."/>
            <person name="Israni S."/>
            <person name="Dalin E."/>
            <person name="Tice H."/>
            <person name="Pitluck S."/>
            <person name="Martinez M."/>
            <person name="Schmutz J."/>
            <person name="Larimer F."/>
            <person name="Land M."/>
            <person name="Hauser L."/>
            <person name="Kyrpides N."/>
            <person name="Kim E."/>
            <person name="Miller C.D."/>
            <person name="Hughes J.E."/>
            <person name="Anderson A.J."/>
            <person name="Sims R.C."/>
            <person name="Richardson P."/>
        </authorList>
    </citation>
    <scope>NUCLEOTIDE SEQUENCE [LARGE SCALE GENOMIC DNA]</scope>
    <source>
        <strain>MCS</strain>
    </source>
</reference>
<comment type="similarity">
    <text evidence="1">Belongs to the bacterial ribosomal protein bL33 family.</text>
</comment>
<sequence length="55" mass="6454">MASSTDVRPKITLACEVCKHRNYITKKNRRNDPDRLELKKFCPNCGTHRAHKESR</sequence>
<organism>
    <name type="scientific">Mycobacterium sp. (strain MCS)</name>
    <dbReference type="NCBI Taxonomy" id="164756"/>
    <lineage>
        <taxon>Bacteria</taxon>
        <taxon>Bacillati</taxon>
        <taxon>Actinomycetota</taxon>
        <taxon>Actinomycetes</taxon>
        <taxon>Mycobacteriales</taxon>
        <taxon>Mycobacteriaceae</taxon>
        <taxon>Mycobacterium</taxon>
    </lineage>
</organism>
<accession>Q1BDK2</accession>